<name>U84A3_ARATH</name>
<gene>
    <name evidence="5" type="primary">UGT84A3</name>
    <name evidence="8" type="ordered locus">At4g15490</name>
    <name evidence="9" type="ORF">dl3785c</name>
    <name evidence="10" type="ORF">FCAALL.17</name>
</gene>
<organism>
    <name type="scientific">Arabidopsis thaliana</name>
    <name type="common">Mouse-ear cress</name>
    <dbReference type="NCBI Taxonomy" id="3702"/>
    <lineage>
        <taxon>Eukaryota</taxon>
        <taxon>Viridiplantae</taxon>
        <taxon>Streptophyta</taxon>
        <taxon>Embryophyta</taxon>
        <taxon>Tracheophyta</taxon>
        <taxon>Spermatophyta</taxon>
        <taxon>Magnoliopsida</taxon>
        <taxon>eudicotyledons</taxon>
        <taxon>Gunneridae</taxon>
        <taxon>Pentapetalae</taxon>
        <taxon>rosids</taxon>
        <taxon>malvids</taxon>
        <taxon>Brassicales</taxon>
        <taxon>Brassicaceae</taxon>
        <taxon>Camelineae</taxon>
        <taxon>Arabidopsis</taxon>
    </lineage>
</organism>
<comment type="function">
    <text evidence="3 4">UDP-glucosyltransferase that forms glucose esters with phenylpropanoids (PubMed:11042211, PubMed:11187886). Glucosylates 4-coumarate, ferulate, caffeate, sinapate and cinnamate (PubMed:11042211, PubMed:11187886).</text>
</comment>
<comment type="catalytic activity">
    <reaction evidence="3 4">
        <text>(E)-4-coumarate + UDP-alpha-D-glucose = 4-O-(beta-D-glucosyl)-trans-4-coumarate + UDP + H(+)</text>
        <dbReference type="Rhea" id="RHEA:21636"/>
        <dbReference type="ChEBI" id="CHEBI:12876"/>
        <dbReference type="ChEBI" id="CHEBI:15378"/>
        <dbReference type="ChEBI" id="CHEBI:58223"/>
        <dbReference type="ChEBI" id="CHEBI:58885"/>
        <dbReference type="ChEBI" id="CHEBI:79066"/>
    </reaction>
</comment>
<comment type="catalytic activity">
    <reaction evidence="3 4">
        <text>(E)-ferulate + UDP-alpha-D-glucose = 1-O-[(E)-feruloyl]-beta-D-glucose + UDP</text>
        <dbReference type="Rhea" id="RHEA:57468"/>
        <dbReference type="ChEBI" id="CHEBI:29749"/>
        <dbReference type="ChEBI" id="CHEBI:58223"/>
        <dbReference type="ChEBI" id="CHEBI:58885"/>
        <dbReference type="ChEBI" id="CHEBI:81321"/>
    </reaction>
</comment>
<comment type="catalytic activity">
    <reaction evidence="3 4">
        <text>(E)-caffeate + UDP-alpha-D-glucose = 1-O-[(E)-caffeoyl]-beta-D-glucose + UDP</text>
        <dbReference type="Rhea" id="RHEA:57464"/>
        <dbReference type="ChEBI" id="CHEBI:614"/>
        <dbReference type="ChEBI" id="CHEBI:57770"/>
        <dbReference type="ChEBI" id="CHEBI:58223"/>
        <dbReference type="ChEBI" id="CHEBI:58885"/>
    </reaction>
</comment>
<comment type="catalytic activity">
    <reaction evidence="3 4">
        <text>(E)-sinapate + UDP-alpha-D-glucose = 1-O-(trans-sinapoyl)-beta-D-glucose + UDP</text>
        <dbReference type="Rhea" id="RHEA:13305"/>
        <dbReference type="ChEBI" id="CHEBI:16546"/>
        <dbReference type="ChEBI" id="CHEBI:30023"/>
        <dbReference type="ChEBI" id="CHEBI:58223"/>
        <dbReference type="ChEBI" id="CHEBI:58885"/>
        <dbReference type="EC" id="2.4.1.120"/>
    </reaction>
</comment>
<comment type="catalytic activity">
    <reaction evidence="3 4">
        <text>(E)-cinnamate + UDP-alpha-D-glucose = 1-O-(trans-cinnamoyl)-beta-D-glucose + UDP</text>
        <dbReference type="Rhea" id="RHEA:13437"/>
        <dbReference type="ChEBI" id="CHEBI:15669"/>
        <dbReference type="ChEBI" id="CHEBI:16279"/>
        <dbReference type="ChEBI" id="CHEBI:58223"/>
        <dbReference type="ChEBI" id="CHEBI:58885"/>
        <dbReference type="EC" id="2.4.1.177"/>
    </reaction>
</comment>
<comment type="biophysicochemical properties">
    <kinetics>
        <KM evidence="3">180 uM for 4-coumarate</KM>
        <KM evidence="3">240 uM for ferulate</KM>
        <KM evidence="3">580 uM for sinapate</KM>
        <KM evidence="3">810 uM for cinnamate</KM>
    </kinetics>
</comment>
<comment type="similarity">
    <text evidence="7">Belongs to the UDP-glycosyltransferase family.</text>
</comment>
<keyword id="KW-0328">Glycosyltransferase</keyword>
<keyword id="KW-1185">Reference proteome</keyword>
<keyword id="KW-0808">Transferase</keyword>
<proteinExistence type="evidence at protein level"/>
<dbReference type="EC" id="2.4.1.120" evidence="3 4"/>
<dbReference type="EC" id="2.4.1.177" evidence="3 4"/>
<dbReference type="EMBL" id="Z97339">
    <property type="protein sequence ID" value="CAB10327.1"/>
    <property type="molecule type" value="Genomic_DNA"/>
</dbReference>
<dbReference type="EMBL" id="AL161541">
    <property type="protein sequence ID" value="CAB78591.1"/>
    <property type="molecule type" value="Genomic_DNA"/>
</dbReference>
<dbReference type="EMBL" id="CP002687">
    <property type="protein sequence ID" value="AEE83610.1"/>
    <property type="molecule type" value="Genomic_DNA"/>
</dbReference>
<dbReference type="EMBL" id="AY057646">
    <property type="protein sequence ID" value="AAL15277.1"/>
    <property type="molecule type" value="mRNA"/>
</dbReference>
<dbReference type="EMBL" id="AY074339">
    <property type="protein sequence ID" value="AAL67035.1"/>
    <property type="molecule type" value="mRNA"/>
</dbReference>
<dbReference type="EMBL" id="AY142676">
    <property type="protein sequence ID" value="AAN13214.1"/>
    <property type="molecule type" value="mRNA"/>
</dbReference>
<dbReference type="EMBL" id="AY087431">
    <property type="protein sequence ID" value="AAM64979.1"/>
    <property type="molecule type" value="mRNA"/>
</dbReference>
<dbReference type="PIR" id="E71419">
    <property type="entry name" value="E71419"/>
</dbReference>
<dbReference type="RefSeq" id="NP_193284.1">
    <property type="nucleotide sequence ID" value="NM_117639.3"/>
</dbReference>
<dbReference type="SMR" id="O23401"/>
<dbReference type="FunCoup" id="O23401">
    <property type="interactions" value="155"/>
</dbReference>
<dbReference type="STRING" id="3702.O23401"/>
<dbReference type="CAZy" id="GT1">
    <property type="family name" value="Glycosyltransferase Family 1"/>
</dbReference>
<dbReference type="PaxDb" id="3702-AT4G15490.1"/>
<dbReference type="ProteomicsDB" id="242614"/>
<dbReference type="EnsemblPlants" id="AT4G15490.1">
    <property type="protein sequence ID" value="AT4G15490.1"/>
    <property type="gene ID" value="AT4G15490"/>
</dbReference>
<dbReference type="GeneID" id="827221"/>
<dbReference type="Gramene" id="AT4G15490.1">
    <property type="protein sequence ID" value="AT4G15490.1"/>
    <property type="gene ID" value="AT4G15490"/>
</dbReference>
<dbReference type="KEGG" id="ath:AT4G15490"/>
<dbReference type="Araport" id="AT4G15490"/>
<dbReference type="TAIR" id="AT4G15490">
    <property type="gene designation" value="UGT84A3"/>
</dbReference>
<dbReference type="eggNOG" id="KOG1192">
    <property type="taxonomic scope" value="Eukaryota"/>
</dbReference>
<dbReference type="HOGENOM" id="CLU_001724_0_1_1"/>
<dbReference type="InParanoid" id="O23401"/>
<dbReference type="OMA" id="LWTQSCT"/>
<dbReference type="PhylomeDB" id="O23401"/>
<dbReference type="BioCyc" id="ARA:AT4G15490-MONOMER"/>
<dbReference type="SABIO-RK" id="O23401"/>
<dbReference type="PRO" id="PR:O23401"/>
<dbReference type="Proteomes" id="UP000006548">
    <property type="component" value="Chromosome 4"/>
</dbReference>
<dbReference type="ExpressionAtlas" id="O23401">
    <property type="expression patterns" value="baseline and differential"/>
</dbReference>
<dbReference type="GO" id="GO:0050412">
    <property type="term" value="F:cinnamate beta-D-glucosyltransferase activity"/>
    <property type="evidence" value="ECO:0007669"/>
    <property type="project" value="UniProtKB-EC"/>
</dbReference>
<dbReference type="GO" id="GO:0047218">
    <property type="term" value="F:hydroxycinnamate 4-beta-glucosyltransferase activity"/>
    <property type="evidence" value="ECO:0007669"/>
    <property type="project" value="RHEA"/>
</dbReference>
<dbReference type="GO" id="GO:0050284">
    <property type="term" value="F:sinapate 1-glucosyltransferase activity"/>
    <property type="evidence" value="ECO:0000250"/>
    <property type="project" value="TAIR"/>
</dbReference>
<dbReference type="CDD" id="cd03784">
    <property type="entry name" value="GT1_Gtf-like"/>
    <property type="match status" value="1"/>
</dbReference>
<dbReference type="FunFam" id="3.40.50.2000:FF:000019">
    <property type="entry name" value="Glycosyltransferase"/>
    <property type="match status" value="1"/>
</dbReference>
<dbReference type="FunFam" id="3.40.50.2000:FF:000101">
    <property type="entry name" value="Glycosyltransferase"/>
    <property type="match status" value="1"/>
</dbReference>
<dbReference type="Gene3D" id="3.40.50.2000">
    <property type="entry name" value="Glycogen Phosphorylase B"/>
    <property type="match status" value="2"/>
</dbReference>
<dbReference type="InterPro" id="IPR002213">
    <property type="entry name" value="UDP_glucos_trans"/>
</dbReference>
<dbReference type="InterPro" id="IPR035595">
    <property type="entry name" value="UDP_glycos_trans_CS"/>
</dbReference>
<dbReference type="PANTHER" id="PTHR11926">
    <property type="entry name" value="GLUCOSYL/GLUCURONOSYL TRANSFERASES"/>
    <property type="match status" value="1"/>
</dbReference>
<dbReference type="PANTHER" id="PTHR11926:SF1299">
    <property type="entry name" value="UDP-GLYCOSYLTRANSFERASE 84A3-RELATED"/>
    <property type="match status" value="1"/>
</dbReference>
<dbReference type="Pfam" id="PF00201">
    <property type="entry name" value="UDPGT"/>
    <property type="match status" value="1"/>
</dbReference>
<dbReference type="SUPFAM" id="SSF53756">
    <property type="entry name" value="UDP-Glycosyltransferase/glycogen phosphorylase"/>
    <property type="match status" value="1"/>
</dbReference>
<dbReference type="PROSITE" id="PS00375">
    <property type="entry name" value="UDPGT"/>
    <property type="match status" value="1"/>
</dbReference>
<feature type="chain" id="PRO_0000409122" description="UDP-glycosyltransferase 84A3">
    <location>
        <begin position="1"/>
        <end position="479"/>
    </location>
</feature>
<feature type="active site" description="Proton acceptor" evidence="1">
    <location>
        <position position="19"/>
    </location>
</feature>
<feature type="binding site" evidence="2">
    <location>
        <position position="19"/>
    </location>
    <ligand>
        <name>an anthocyanidin</name>
        <dbReference type="ChEBI" id="CHEBI:143576"/>
    </ligand>
</feature>
<feature type="binding site" evidence="1">
    <location>
        <position position="346"/>
    </location>
    <ligand>
        <name>UDP-alpha-D-glucose</name>
        <dbReference type="ChEBI" id="CHEBI:58885"/>
    </ligand>
</feature>
<feature type="binding site" evidence="1">
    <location>
        <position position="361"/>
    </location>
    <ligand>
        <name>UDP-alpha-D-glucose</name>
        <dbReference type="ChEBI" id="CHEBI:58885"/>
    </ligand>
</feature>
<feature type="binding site" evidence="1">
    <location>
        <position position="364"/>
    </location>
    <ligand>
        <name>UDP-alpha-D-glucose</name>
        <dbReference type="ChEBI" id="CHEBI:58885"/>
    </ligand>
</feature>
<feature type="binding site" evidence="1">
    <location>
        <position position="365"/>
    </location>
    <ligand>
        <name>UDP-alpha-D-glucose</name>
        <dbReference type="ChEBI" id="CHEBI:58885"/>
    </ligand>
</feature>
<feature type="binding site" evidence="1">
    <location>
        <position position="366"/>
    </location>
    <ligand>
        <name>UDP-alpha-D-glucose</name>
        <dbReference type="ChEBI" id="CHEBI:58885"/>
    </ligand>
</feature>
<feature type="binding site" evidence="1">
    <location>
        <position position="369"/>
    </location>
    <ligand>
        <name>UDP-alpha-D-glucose</name>
        <dbReference type="ChEBI" id="CHEBI:58885"/>
    </ligand>
</feature>
<feature type="binding site" evidence="2">
    <location>
        <position position="384"/>
    </location>
    <ligand>
        <name>an anthocyanidin</name>
        <dbReference type="ChEBI" id="CHEBI:143576"/>
    </ligand>
</feature>
<feature type="binding site" evidence="1">
    <location>
        <position position="385"/>
    </location>
    <ligand>
        <name>UDP-alpha-D-glucose</name>
        <dbReference type="ChEBI" id="CHEBI:58885"/>
    </ligand>
</feature>
<feature type="binding site" evidence="1">
    <location>
        <position position="386"/>
    </location>
    <ligand>
        <name>UDP-alpha-D-glucose</name>
        <dbReference type="ChEBI" id="CHEBI:58885"/>
    </ligand>
</feature>
<feature type="sequence conflict" description="In Ref. 5; AAM64979." evidence="7" ref="5">
    <original>K</original>
    <variation>Q</variation>
    <location>
        <position position="44"/>
    </location>
</feature>
<feature type="sequence conflict" description="In Ref. 5; AAM64979." evidence="7" ref="5">
    <original>F</original>
    <variation>L</variation>
    <location>
        <position position="78"/>
    </location>
</feature>
<feature type="sequence conflict" description="In Ref. 5; AAM64979." evidence="7" ref="5">
    <original>M</original>
    <variation>I</variation>
    <location>
        <position position="230"/>
    </location>
</feature>
<feature type="sequence conflict" description="In Ref. 5; AAM64979." evidence="7" ref="5">
    <original>S</original>
    <variation>G</variation>
    <location>
        <position position="307"/>
    </location>
</feature>
<feature type="sequence conflict" description="In Ref. 5; AAM64979." evidence="7" ref="5">
    <original>F</original>
    <variation>L</variation>
    <location>
        <position position="324"/>
    </location>
</feature>
<feature type="sequence conflict" description="In Ref. 5; AAM64979." evidence="7" ref="5">
    <original>G</original>
    <variation>S</variation>
    <location>
        <position position="404"/>
    </location>
</feature>
<sequence length="479" mass="53913">MDPSRHTHVMLVSFPGQGHVNPLLRLGKLIASKGLLVTFVTTEKPWGKKMRQANKIQDGVLKPVGLGFIRFEFFSDGFADDDEKRFDFDAFRPHLEAVGKQEIKNLVKRYNKEPVTCLINNAFVPWVCDVAEELHIPSAVLWVQSCACLTAYYYYHHRLVKFPTKTEPDISVEIPCLPLLKHDEIPSFLHPSSPYTAFGDIILDQLKRFENHKSFYLFIDTFRELEKDIMDHMSQLCPQAIISPVGPLFKMAQTLSSDVKGDISEPASDCMEWLDSREPSSVVYISFGTIANLKQEQMEEIAHGVLSSGLSVLWVVRPPMEGTFVEPHVLPRELEEKGKIVEWCPQERVLAHPAIACFLSHCGWNSTMEALTAGVPVVCFPQWGDQVTDAVYLADVFKTGVRLGRGAAEEMIVSREVVAEKLLEATVGEKAVELRENARRWKAEAEAAVADGGSSDMNFKEFVDKLVTKHVTREDNGEH</sequence>
<protein>
    <recommendedName>
        <fullName evidence="5">UDP-glycosyltransferase 84A3</fullName>
        <ecNumber evidence="3 4">2.4.1.120</ecNumber>
        <ecNumber evidence="3 4">2.4.1.177</ecNumber>
    </recommendedName>
    <alternativeName>
        <fullName evidence="6">Hydroxycinnamate glucosyltransferase 3</fullName>
        <shortName evidence="6">AtHCAGT3</shortName>
    </alternativeName>
</protein>
<evidence type="ECO:0000250" key="1">
    <source>
        <dbReference type="UniProtKB" id="A0A0A1HA03"/>
    </source>
</evidence>
<evidence type="ECO:0000250" key="2">
    <source>
        <dbReference type="UniProtKB" id="P51094"/>
    </source>
</evidence>
<evidence type="ECO:0000269" key="3">
    <source>
    </source>
</evidence>
<evidence type="ECO:0000269" key="4">
    <source>
    </source>
</evidence>
<evidence type="ECO:0000303" key="5">
    <source>
    </source>
</evidence>
<evidence type="ECO:0000303" key="6">
    <source>
    </source>
</evidence>
<evidence type="ECO:0000305" key="7"/>
<evidence type="ECO:0000312" key="8">
    <source>
        <dbReference type="Araport" id="AT4G15490"/>
    </source>
</evidence>
<evidence type="ECO:0000312" key="9">
    <source>
        <dbReference type="EMBL" id="CAB10327.1"/>
    </source>
</evidence>
<evidence type="ECO:0000312" key="10">
    <source>
        <dbReference type="EMBL" id="CAB78591.1"/>
    </source>
</evidence>
<reference key="1">
    <citation type="journal article" date="1998" name="Nature">
        <title>Analysis of 1.9 Mb of contiguous sequence from chromosome 4 of Arabidopsis thaliana.</title>
        <authorList>
            <person name="Bevan M."/>
            <person name="Bancroft I."/>
            <person name="Bent E."/>
            <person name="Love K."/>
            <person name="Goodman H.M."/>
            <person name="Dean C."/>
            <person name="Bergkamp R."/>
            <person name="Dirkse W."/>
            <person name="van Staveren M."/>
            <person name="Stiekema W."/>
            <person name="Drost L."/>
            <person name="Ridley P."/>
            <person name="Hudson S.-A."/>
            <person name="Patel K."/>
            <person name="Murphy G."/>
            <person name="Piffanelli P."/>
            <person name="Wedler H."/>
            <person name="Wedler E."/>
            <person name="Wambutt R."/>
            <person name="Weitzenegger T."/>
            <person name="Pohl T."/>
            <person name="Terryn N."/>
            <person name="Gielen J."/>
            <person name="Villarroel R."/>
            <person name="De Clercq R."/>
            <person name="van Montagu M."/>
            <person name="Lecharny A."/>
            <person name="Aubourg S."/>
            <person name="Gy I."/>
            <person name="Kreis M."/>
            <person name="Lao N."/>
            <person name="Kavanagh T."/>
            <person name="Hempel S."/>
            <person name="Kotter P."/>
            <person name="Entian K.-D."/>
            <person name="Rieger M."/>
            <person name="Schaefer M."/>
            <person name="Funk B."/>
            <person name="Mueller-Auer S."/>
            <person name="Silvey M."/>
            <person name="James R."/>
            <person name="Monfort A."/>
            <person name="Pons A."/>
            <person name="Puigdomenech P."/>
            <person name="Douka A."/>
            <person name="Voukelatou E."/>
            <person name="Milioni D."/>
            <person name="Hatzopoulos P."/>
            <person name="Piravandi E."/>
            <person name="Obermaier B."/>
            <person name="Hilbert H."/>
            <person name="Duesterhoeft A."/>
            <person name="Moores T."/>
            <person name="Jones J.D.G."/>
            <person name="Eneva T."/>
            <person name="Palme K."/>
            <person name="Benes V."/>
            <person name="Rechmann S."/>
            <person name="Ansorge W."/>
            <person name="Cooke R."/>
            <person name="Berger C."/>
            <person name="Delseny M."/>
            <person name="Voet M."/>
            <person name="Volckaert G."/>
            <person name="Mewes H.-W."/>
            <person name="Klosterman S."/>
            <person name="Schueller C."/>
            <person name="Chalwatzis N."/>
        </authorList>
    </citation>
    <scope>NUCLEOTIDE SEQUENCE [LARGE SCALE GENOMIC DNA]</scope>
    <source>
        <strain>cv. Columbia</strain>
    </source>
</reference>
<reference key="2">
    <citation type="journal article" date="1999" name="Nature">
        <title>Sequence and analysis of chromosome 4 of the plant Arabidopsis thaliana.</title>
        <authorList>
            <person name="Mayer K.F.X."/>
            <person name="Schueller C."/>
            <person name="Wambutt R."/>
            <person name="Murphy G."/>
            <person name="Volckaert G."/>
            <person name="Pohl T."/>
            <person name="Duesterhoeft A."/>
            <person name="Stiekema W."/>
            <person name="Entian K.-D."/>
            <person name="Terryn N."/>
            <person name="Harris B."/>
            <person name="Ansorge W."/>
            <person name="Brandt P."/>
            <person name="Grivell L.A."/>
            <person name="Rieger M."/>
            <person name="Weichselgartner M."/>
            <person name="de Simone V."/>
            <person name="Obermaier B."/>
            <person name="Mache R."/>
            <person name="Mueller M."/>
            <person name="Kreis M."/>
            <person name="Delseny M."/>
            <person name="Puigdomenech P."/>
            <person name="Watson M."/>
            <person name="Schmidtheini T."/>
            <person name="Reichert B."/>
            <person name="Portetelle D."/>
            <person name="Perez-Alonso M."/>
            <person name="Boutry M."/>
            <person name="Bancroft I."/>
            <person name="Vos P."/>
            <person name="Hoheisel J."/>
            <person name="Zimmermann W."/>
            <person name="Wedler H."/>
            <person name="Ridley P."/>
            <person name="Langham S.-A."/>
            <person name="McCullagh B."/>
            <person name="Bilham L."/>
            <person name="Robben J."/>
            <person name="van der Schueren J."/>
            <person name="Grymonprez B."/>
            <person name="Chuang Y.-J."/>
            <person name="Vandenbussche F."/>
            <person name="Braeken M."/>
            <person name="Weltjens I."/>
            <person name="Voet M."/>
            <person name="Bastiaens I."/>
            <person name="Aert R."/>
            <person name="Defoor E."/>
            <person name="Weitzenegger T."/>
            <person name="Bothe G."/>
            <person name="Ramsperger U."/>
            <person name="Hilbert H."/>
            <person name="Braun M."/>
            <person name="Holzer E."/>
            <person name="Brandt A."/>
            <person name="Peters S."/>
            <person name="van Staveren M."/>
            <person name="Dirkse W."/>
            <person name="Mooijman P."/>
            <person name="Klein Lankhorst R."/>
            <person name="Rose M."/>
            <person name="Hauf J."/>
            <person name="Koetter P."/>
            <person name="Berneiser S."/>
            <person name="Hempel S."/>
            <person name="Feldpausch M."/>
            <person name="Lamberth S."/>
            <person name="Van den Daele H."/>
            <person name="De Keyser A."/>
            <person name="Buysshaert C."/>
            <person name="Gielen J."/>
            <person name="Villarroel R."/>
            <person name="De Clercq R."/>
            <person name="van Montagu M."/>
            <person name="Rogers J."/>
            <person name="Cronin A."/>
            <person name="Quail M.A."/>
            <person name="Bray-Allen S."/>
            <person name="Clark L."/>
            <person name="Doggett J."/>
            <person name="Hall S."/>
            <person name="Kay M."/>
            <person name="Lennard N."/>
            <person name="McLay K."/>
            <person name="Mayes R."/>
            <person name="Pettett A."/>
            <person name="Rajandream M.A."/>
            <person name="Lyne M."/>
            <person name="Benes V."/>
            <person name="Rechmann S."/>
            <person name="Borkova D."/>
            <person name="Bloecker H."/>
            <person name="Scharfe M."/>
            <person name="Grimm M."/>
            <person name="Loehnert T.-H."/>
            <person name="Dose S."/>
            <person name="de Haan M."/>
            <person name="Maarse A.C."/>
            <person name="Schaefer M."/>
            <person name="Mueller-Auer S."/>
            <person name="Gabel C."/>
            <person name="Fuchs M."/>
            <person name="Fartmann B."/>
            <person name="Granderath K."/>
            <person name="Dauner D."/>
            <person name="Herzl A."/>
            <person name="Neumann S."/>
            <person name="Argiriou A."/>
            <person name="Vitale D."/>
            <person name="Liguori R."/>
            <person name="Piravandi E."/>
            <person name="Massenet O."/>
            <person name="Quigley F."/>
            <person name="Clabauld G."/>
            <person name="Muendlein A."/>
            <person name="Felber R."/>
            <person name="Schnabl S."/>
            <person name="Hiller R."/>
            <person name="Schmidt W."/>
            <person name="Lecharny A."/>
            <person name="Aubourg S."/>
            <person name="Chefdor F."/>
            <person name="Cooke R."/>
            <person name="Berger C."/>
            <person name="Monfort A."/>
            <person name="Casacuberta E."/>
            <person name="Gibbons T."/>
            <person name="Weber N."/>
            <person name="Vandenbol M."/>
            <person name="Bargues M."/>
            <person name="Terol J."/>
            <person name="Torres A."/>
            <person name="Perez-Perez A."/>
            <person name="Purnelle B."/>
            <person name="Bent E."/>
            <person name="Johnson S."/>
            <person name="Tacon D."/>
            <person name="Jesse T."/>
            <person name="Heijnen L."/>
            <person name="Schwarz S."/>
            <person name="Scholler P."/>
            <person name="Heber S."/>
            <person name="Francs P."/>
            <person name="Bielke C."/>
            <person name="Frishman D."/>
            <person name="Haase D."/>
            <person name="Lemcke K."/>
            <person name="Mewes H.-W."/>
            <person name="Stocker S."/>
            <person name="Zaccaria P."/>
            <person name="Bevan M."/>
            <person name="Wilson R.K."/>
            <person name="de la Bastide M."/>
            <person name="Habermann K."/>
            <person name="Parnell L."/>
            <person name="Dedhia N."/>
            <person name="Gnoj L."/>
            <person name="Schutz K."/>
            <person name="Huang E."/>
            <person name="Spiegel L."/>
            <person name="Sekhon M."/>
            <person name="Murray J."/>
            <person name="Sheet P."/>
            <person name="Cordes M."/>
            <person name="Abu-Threideh J."/>
            <person name="Stoneking T."/>
            <person name="Kalicki J."/>
            <person name="Graves T."/>
            <person name="Harmon G."/>
            <person name="Edwards J."/>
            <person name="Latreille P."/>
            <person name="Courtney L."/>
            <person name="Cloud J."/>
            <person name="Abbott A."/>
            <person name="Scott K."/>
            <person name="Johnson D."/>
            <person name="Minx P."/>
            <person name="Bentley D."/>
            <person name="Fulton B."/>
            <person name="Miller N."/>
            <person name="Greco T."/>
            <person name="Kemp K."/>
            <person name="Kramer J."/>
            <person name="Fulton L."/>
            <person name="Mardis E."/>
            <person name="Dante M."/>
            <person name="Pepin K."/>
            <person name="Hillier L.W."/>
            <person name="Nelson J."/>
            <person name="Spieth J."/>
            <person name="Ryan E."/>
            <person name="Andrews S."/>
            <person name="Geisel C."/>
            <person name="Layman D."/>
            <person name="Du H."/>
            <person name="Ali J."/>
            <person name="Berghoff A."/>
            <person name="Jones K."/>
            <person name="Drone K."/>
            <person name="Cotton M."/>
            <person name="Joshu C."/>
            <person name="Antonoiu B."/>
            <person name="Zidanic M."/>
            <person name="Strong C."/>
            <person name="Sun H."/>
            <person name="Lamar B."/>
            <person name="Yordan C."/>
            <person name="Ma P."/>
            <person name="Zhong J."/>
            <person name="Preston R."/>
            <person name="Vil D."/>
            <person name="Shekher M."/>
            <person name="Matero A."/>
            <person name="Shah R."/>
            <person name="Swaby I.K."/>
            <person name="O'Shaughnessy A."/>
            <person name="Rodriguez M."/>
            <person name="Hoffman J."/>
            <person name="Till S."/>
            <person name="Granat S."/>
            <person name="Shohdy N."/>
            <person name="Hasegawa A."/>
            <person name="Hameed A."/>
            <person name="Lodhi M."/>
            <person name="Johnson A."/>
            <person name="Chen E."/>
            <person name="Marra M.A."/>
            <person name="Martienssen R."/>
            <person name="McCombie W.R."/>
        </authorList>
    </citation>
    <scope>NUCLEOTIDE SEQUENCE [LARGE SCALE GENOMIC DNA]</scope>
    <source>
        <strain>cv. Columbia</strain>
    </source>
</reference>
<reference key="3">
    <citation type="journal article" date="2017" name="Plant J.">
        <title>Araport11: a complete reannotation of the Arabidopsis thaliana reference genome.</title>
        <authorList>
            <person name="Cheng C.Y."/>
            <person name="Krishnakumar V."/>
            <person name="Chan A.P."/>
            <person name="Thibaud-Nissen F."/>
            <person name="Schobel S."/>
            <person name="Town C.D."/>
        </authorList>
    </citation>
    <scope>GENOME REANNOTATION</scope>
    <source>
        <strain>cv. Columbia</strain>
    </source>
</reference>
<reference key="4">
    <citation type="journal article" date="2003" name="Science">
        <title>Empirical analysis of transcriptional activity in the Arabidopsis genome.</title>
        <authorList>
            <person name="Yamada K."/>
            <person name="Lim J."/>
            <person name="Dale J.M."/>
            <person name="Chen H."/>
            <person name="Shinn P."/>
            <person name="Palm C.J."/>
            <person name="Southwick A.M."/>
            <person name="Wu H.C."/>
            <person name="Kim C.J."/>
            <person name="Nguyen M."/>
            <person name="Pham P.K."/>
            <person name="Cheuk R.F."/>
            <person name="Karlin-Newmann G."/>
            <person name="Liu S.X."/>
            <person name="Lam B."/>
            <person name="Sakano H."/>
            <person name="Wu T."/>
            <person name="Yu G."/>
            <person name="Miranda M."/>
            <person name="Quach H.L."/>
            <person name="Tripp M."/>
            <person name="Chang C.H."/>
            <person name="Lee J.M."/>
            <person name="Toriumi M.J."/>
            <person name="Chan M.M."/>
            <person name="Tang C.C."/>
            <person name="Onodera C.S."/>
            <person name="Deng J.M."/>
            <person name="Akiyama K."/>
            <person name="Ansari Y."/>
            <person name="Arakawa T."/>
            <person name="Banh J."/>
            <person name="Banno F."/>
            <person name="Bowser L."/>
            <person name="Brooks S.Y."/>
            <person name="Carninci P."/>
            <person name="Chao Q."/>
            <person name="Choy N."/>
            <person name="Enju A."/>
            <person name="Goldsmith A.D."/>
            <person name="Gurjal M."/>
            <person name="Hansen N.F."/>
            <person name="Hayashizaki Y."/>
            <person name="Johnson-Hopson C."/>
            <person name="Hsuan V.W."/>
            <person name="Iida K."/>
            <person name="Karnes M."/>
            <person name="Khan S."/>
            <person name="Koesema E."/>
            <person name="Ishida J."/>
            <person name="Jiang P.X."/>
            <person name="Jones T."/>
            <person name="Kawai J."/>
            <person name="Kamiya A."/>
            <person name="Meyers C."/>
            <person name="Nakajima M."/>
            <person name="Narusaka M."/>
            <person name="Seki M."/>
            <person name="Sakurai T."/>
            <person name="Satou M."/>
            <person name="Tamse R."/>
            <person name="Vaysberg M."/>
            <person name="Wallender E.K."/>
            <person name="Wong C."/>
            <person name="Yamamura Y."/>
            <person name="Yuan S."/>
            <person name="Shinozaki K."/>
            <person name="Davis R.W."/>
            <person name="Theologis A."/>
            <person name="Ecker J.R."/>
        </authorList>
    </citation>
    <scope>NUCLEOTIDE SEQUENCE [LARGE SCALE MRNA]</scope>
    <source>
        <strain>cv. Columbia</strain>
    </source>
</reference>
<reference key="5">
    <citation type="submission" date="2002-03" db="EMBL/GenBank/DDBJ databases">
        <title>Full-length cDNA from Arabidopsis thaliana.</title>
        <authorList>
            <person name="Brover V.V."/>
            <person name="Troukhan M.E."/>
            <person name="Alexandrov N.A."/>
            <person name="Lu Y.-P."/>
            <person name="Flavell R.B."/>
            <person name="Feldmann K.A."/>
        </authorList>
    </citation>
    <scope>NUCLEOTIDE SEQUENCE [LARGE SCALE MRNA]</scope>
</reference>
<reference key="6">
    <citation type="journal article" date="2000" name="FEBS Lett.">
        <title>Identification of four Arabidopsis genes encoding hydroxycinnamate glucosyltransferases.</title>
        <authorList>
            <person name="Milkowski C."/>
            <person name="Baumert A."/>
            <person name="Strack D."/>
        </authorList>
    </citation>
    <scope>FUNCTION</scope>
    <scope>CATALYTIC ACTIVITY</scope>
</reference>
<reference key="7">
    <citation type="journal article" date="2001" name="J. Biol. Chem.">
        <title>Phylogenetic analysis of the UDP-glycosyltransferase multigene family of Arabidopsis thaliana.</title>
        <authorList>
            <person name="Li Y."/>
            <person name="Baldauf S."/>
            <person name="Lim E.K."/>
            <person name="Bowles D.J."/>
        </authorList>
    </citation>
    <scope>GENE FAMILY</scope>
</reference>
<reference key="8">
    <citation type="journal article" date="2001" name="J. Biol. Chem.">
        <title>Identification of glucosyltransferase genes involved in sinapate metabolism and lignin synthesis in Arabidopsis.</title>
        <authorList>
            <person name="Lim E.K."/>
            <person name="Li Y."/>
            <person name="Parr A."/>
            <person name="Jackson R."/>
            <person name="Ashford D.A."/>
            <person name="Bowles D.J."/>
        </authorList>
    </citation>
    <scope>FUNCTION</scope>
    <scope>CATALYTIC ACTIVITY</scope>
    <scope>BIOPHYSICOCHEMICAL PROPERTIES</scope>
</reference>
<accession>O23401</accession>
<accession>Q8LB44</accession>